<feature type="chain" id="PRO_1000126531" description="Small ribosomal subunit protein bS20">
    <location>
        <begin position="1"/>
        <end position="84"/>
    </location>
</feature>
<feature type="region of interest" description="Disordered" evidence="2">
    <location>
        <begin position="1"/>
        <end position="25"/>
    </location>
</feature>
<organism>
    <name type="scientific">Ureaplasma urealyticum serovar 10 (strain ATCC 33699 / Western)</name>
    <dbReference type="NCBI Taxonomy" id="565575"/>
    <lineage>
        <taxon>Bacteria</taxon>
        <taxon>Bacillati</taxon>
        <taxon>Mycoplasmatota</taxon>
        <taxon>Mycoplasmoidales</taxon>
        <taxon>Mycoplasmoidaceae</taxon>
        <taxon>Ureaplasma</taxon>
    </lineage>
</organism>
<keyword id="KW-0687">Ribonucleoprotein</keyword>
<keyword id="KW-0689">Ribosomal protein</keyword>
<keyword id="KW-0694">RNA-binding</keyword>
<keyword id="KW-0699">rRNA-binding</keyword>
<reference key="1">
    <citation type="submission" date="2008-10" db="EMBL/GenBank/DDBJ databases">
        <title>Genome sequence of Ureaplasma urealyticum serovar 10 ATCC-33699.</title>
        <authorList>
            <person name="Shrivastava S."/>
            <person name="Methe B.A."/>
            <person name="Glass J."/>
            <person name="White K."/>
            <person name="Duffy L.B."/>
        </authorList>
    </citation>
    <scope>NUCLEOTIDE SEQUENCE [LARGE SCALE GENOMIC DNA]</scope>
    <source>
        <strain>ATCC 33699 / Western</strain>
    </source>
</reference>
<gene>
    <name evidence="1" type="primary">rpsT</name>
    <name type="ordered locus">UUR10_0314</name>
</gene>
<protein>
    <recommendedName>
        <fullName evidence="1">Small ribosomal subunit protein bS20</fullName>
    </recommendedName>
    <alternativeName>
        <fullName evidence="3">30S ribosomal protein S20</fullName>
    </alternativeName>
</protein>
<evidence type="ECO:0000255" key="1">
    <source>
        <dbReference type="HAMAP-Rule" id="MF_00500"/>
    </source>
</evidence>
<evidence type="ECO:0000256" key="2">
    <source>
        <dbReference type="SAM" id="MobiDB-lite"/>
    </source>
</evidence>
<evidence type="ECO:0000305" key="3"/>
<proteinExistence type="inferred from homology"/>
<sequence>MANIVSNEKTYRHTQKVRKENHAKMSKLRTIVKKTRSSNEQAQLNEAYKVIDTTASKGVIHKNKANRLKSRTAKAFKANLQVVA</sequence>
<name>RS20_UREU1</name>
<dbReference type="EMBL" id="CP001184">
    <property type="protein sequence ID" value="ACI60228.1"/>
    <property type="molecule type" value="Genomic_DNA"/>
</dbReference>
<dbReference type="RefSeq" id="WP_004025931.1">
    <property type="nucleotide sequence ID" value="NC_011374.1"/>
</dbReference>
<dbReference type="SMR" id="B5ZBB8"/>
<dbReference type="STRING" id="565575.UUR10_0314"/>
<dbReference type="GeneID" id="93848793"/>
<dbReference type="KEGG" id="uue:UUR10_0314"/>
<dbReference type="eggNOG" id="COG0268">
    <property type="taxonomic scope" value="Bacteria"/>
</dbReference>
<dbReference type="HOGENOM" id="CLU_160655_1_0_14"/>
<dbReference type="OrthoDB" id="404032at2"/>
<dbReference type="Proteomes" id="UP000002018">
    <property type="component" value="Chromosome"/>
</dbReference>
<dbReference type="GO" id="GO:0015935">
    <property type="term" value="C:small ribosomal subunit"/>
    <property type="evidence" value="ECO:0007669"/>
    <property type="project" value="TreeGrafter"/>
</dbReference>
<dbReference type="GO" id="GO:0070181">
    <property type="term" value="F:small ribosomal subunit rRNA binding"/>
    <property type="evidence" value="ECO:0007669"/>
    <property type="project" value="TreeGrafter"/>
</dbReference>
<dbReference type="GO" id="GO:0003735">
    <property type="term" value="F:structural constituent of ribosome"/>
    <property type="evidence" value="ECO:0007669"/>
    <property type="project" value="InterPro"/>
</dbReference>
<dbReference type="GO" id="GO:0006412">
    <property type="term" value="P:translation"/>
    <property type="evidence" value="ECO:0007669"/>
    <property type="project" value="UniProtKB-UniRule"/>
</dbReference>
<dbReference type="Gene3D" id="1.20.58.110">
    <property type="entry name" value="Ribosomal protein S20"/>
    <property type="match status" value="1"/>
</dbReference>
<dbReference type="HAMAP" id="MF_00500">
    <property type="entry name" value="Ribosomal_bS20"/>
    <property type="match status" value="1"/>
</dbReference>
<dbReference type="InterPro" id="IPR002583">
    <property type="entry name" value="Ribosomal_bS20"/>
</dbReference>
<dbReference type="InterPro" id="IPR036510">
    <property type="entry name" value="Ribosomal_bS20_sf"/>
</dbReference>
<dbReference type="NCBIfam" id="TIGR00029">
    <property type="entry name" value="S20"/>
    <property type="match status" value="1"/>
</dbReference>
<dbReference type="PANTHER" id="PTHR33398">
    <property type="entry name" value="30S RIBOSOMAL PROTEIN S20"/>
    <property type="match status" value="1"/>
</dbReference>
<dbReference type="PANTHER" id="PTHR33398:SF1">
    <property type="entry name" value="SMALL RIBOSOMAL SUBUNIT PROTEIN BS20C"/>
    <property type="match status" value="1"/>
</dbReference>
<dbReference type="Pfam" id="PF01649">
    <property type="entry name" value="Ribosomal_S20p"/>
    <property type="match status" value="1"/>
</dbReference>
<dbReference type="SUPFAM" id="SSF46992">
    <property type="entry name" value="Ribosomal protein S20"/>
    <property type="match status" value="1"/>
</dbReference>
<comment type="function">
    <text evidence="1">Binds directly to 16S ribosomal RNA.</text>
</comment>
<comment type="similarity">
    <text evidence="1">Belongs to the bacterial ribosomal protein bS20 family.</text>
</comment>
<accession>B5ZBB8</accession>